<protein>
    <recommendedName>
        <fullName evidence="2">2-isopropylmalate synthase</fullName>
        <ecNumber evidence="2">2.3.3.13</ecNumber>
    </recommendedName>
    <alternativeName>
        <fullName evidence="2">Alpha-IPM synthase</fullName>
    </alternativeName>
    <alternativeName>
        <fullName evidence="2">Alpha-isopropylmalate synthase</fullName>
    </alternativeName>
</protein>
<organism>
    <name type="scientific">Escherichia coli O6:H1 (strain CFT073 / ATCC 700928 / UPEC)</name>
    <dbReference type="NCBI Taxonomy" id="199310"/>
    <lineage>
        <taxon>Bacteria</taxon>
        <taxon>Pseudomonadati</taxon>
        <taxon>Pseudomonadota</taxon>
        <taxon>Gammaproteobacteria</taxon>
        <taxon>Enterobacterales</taxon>
        <taxon>Enterobacteriaceae</taxon>
        <taxon>Escherichia</taxon>
    </lineage>
</organism>
<reference key="1">
    <citation type="journal article" date="2002" name="Proc. Natl. Acad. Sci. U.S.A.">
        <title>Extensive mosaic structure revealed by the complete genome sequence of uropathogenic Escherichia coli.</title>
        <authorList>
            <person name="Welch R.A."/>
            <person name="Burland V."/>
            <person name="Plunkett G. III"/>
            <person name="Redford P."/>
            <person name="Roesch P."/>
            <person name="Rasko D."/>
            <person name="Buckles E.L."/>
            <person name="Liou S.-R."/>
            <person name="Boutin A."/>
            <person name="Hackett J."/>
            <person name="Stroud D."/>
            <person name="Mayhew G.F."/>
            <person name="Rose D.J."/>
            <person name="Zhou S."/>
            <person name="Schwartz D.C."/>
            <person name="Perna N.T."/>
            <person name="Mobley H.L.T."/>
            <person name="Donnenberg M.S."/>
            <person name="Blattner F.R."/>
        </authorList>
    </citation>
    <scope>NUCLEOTIDE SEQUENCE [LARGE SCALE GENOMIC DNA]</scope>
    <source>
        <strain>CFT073 / ATCC 700928 / UPEC</strain>
    </source>
</reference>
<sequence length="523" mass="57284">MSQQVIIFDTTLRDGEQALQASLSVKEKLQIALALERMGVDVMEVGFPVSSPGDFESVQTIARQVKNSRVCALARCVEKDIDVAAESLKVAEAFRIHTFIATSPMHIATKLRSTLDEVIERAIYMVKRARNYTDDVEFSCEDAGRTPIADLARVVEAAINAGATTINIPDTVGYTMPFEFAGIISGLYERVPNIDKAIISVHTHDDLGLAVGNSLAAVHAGARQVEGAMNGIGERAGNCSLEEVIMAIKVRKDILNVHTAINHQEIWRTSQLVSQICNMPIPANKAIVGSGAFAHSSGIHQDGVLKNRENYEIMTPESIGLNQIQLNLTSRSGRAAVKHRMDEMGYKESEYNLDNLYDAFLKLADKKGQVFDYDLEALAFIGKQQEEPEHFRLDYFSVQSGSNDIATAAVKLACGEEVKAEAANGNGPVDAVYQAINRITDYNVELVKYSLTAKGHGKDALGQVDIVANYNGRRFHGVGLATDIVESSAKAMVHVLNNIWRAAEVEKELQRKAQHNENNKETV</sequence>
<dbReference type="EC" id="2.3.3.13" evidence="2"/>
<dbReference type="EMBL" id="AE014075">
    <property type="protein sequence ID" value="AAN78587.1"/>
    <property type="status" value="ALT_INIT"/>
    <property type="molecule type" value="Genomic_DNA"/>
</dbReference>
<dbReference type="RefSeq" id="WP_000082846.1">
    <property type="nucleotide sequence ID" value="NZ_CP051263.1"/>
</dbReference>
<dbReference type="SMR" id="Q8FL75"/>
<dbReference type="STRING" id="199310.c0091"/>
<dbReference type="GeneID" id="75202109"/>
<dbReference type="KEGG" id="ecc:c0091"/>
<dbReference type="eggNOG" id="COG0119">
    <property type="taxonomic scope" value="Bacteria"/>
</dbReference>
<dbReference type="HOGENOM" id="CLU_022158_0_1_6"/>
<dbReference type="UniPathway" id="UPA00048">
    <property type="reaction ID" value="UER00070"/>
</dbReference>
<dbReference type="Proteomes" id="UP000001410">
    <property type="component" value="Chromosome"/>
</dbReference>
<dbReference type="GO" id="GO:0005829">
    <property type="term" value="C:cytosol"/>
    <property type="evidence" value="ECO:0007669"/>
    <property type="project" value="TreeGrafter"/>
</dbReference>
<dbReference type="GO" id="GO:0003852">
    <property type="term" value="F:2-isopropylmalate synthase activity"/>
    <property type="evidence" value="ECO:0007669"/>
    <property type="project" value="UniProtKB-UniRule"/>
</dbReference>
<dbReference type="GO" id="GO:0003985">
    <property type="term" value="F:acetyl-CoA C-acetyltransferase activity"/>
    <property type="evidence" value="ECO:0007669"/>
    <property type="project" value="UniProtKB-UniRule"/>
</dbReference>
<dbReference type="GO" id="GO:0030145">
    <property type="term" value="F:manganese ion binding"/>
    <property type="evidence" value="ECO:0007669"/>
    <property type="project" value="UniProtKB-UniRule"/>
</dbReference>
<dbReference type="GO" id="GO:0009098">
    <property type="term" value="P:L-leucine biosynthetic process"/>
    <property type="evidence" value="ECO:0007669"/>
    <property type="project" value="UniProtKB-UniRule"/>
</dbReference>
<dbReference type="CDD" id="cd07940">
    <property type="entry name" value="DRE_TIM_IPMS"/>
    <property type="match status" value="1"/>
</dbReference>
<dbReference type="FunFam" id="1.10.238.260:FF:000001">
    <property type="entry name" value="2-isopropylmalate synthase"/>
    <property type="match status" value="1"/>
</dbReference>
<dbReference type="FunFam" id="3.20.20.70:FF:000010">
    <property type="entry name" value="2-isopropylmalate synthase"/>
    <property type="match status" value="1"/>
</dbReference>
<dbReference type="FunFam" id="3.30.160.270:FF:000001">
    <property type="entry name" value="2-isopropylmalate synthase"/>
    <property type="match status" value="1"/>
</dbReference>
<dbReference type="Gene3D" id="1.10.238.260">
    <property type="match status" value="1"/>
</dbReference>
<dbReference type="Gene3D" id="3.30.160.270">
    <property type="match status" value="1"/>
</dbReference>
<dbReference type="Gene3D" id="3.20.20.70">
    <property type="entry name" value="Aldolase class I"/>
    <property type="match status" value="1"/>
</dbReference>
<dbReference type="HAMAP" id="MF_01025">
    <property type="entry name" value="LeuA_type1"/>
    <property type="match status" value="1"/>
</dbReference>
<dbReference type="InterPro" id="IPR050073">
    <property type="entry name" value="2-IPM_HCS-like"/>
</dbReference>
<dbReference type="InterPro" id="IPR013709">
    <property type="entry name" value="2-isopropylmalate_synth_dimer"/>
</dbReference>
<dbReference type="InterPro" id="IPR002034">
    <property type="entry name" value="AIPM/Hcit_synth_CS"/>
</dbReference>
<dbReference type="InterPro" id="IPR013785">
    <property type="entry name" value="Aldolase_TIM"/>
</dbReference>
<dbReference type="InterPro" id="IPR054691">
    <property type="entry name" value="LeuA/HCS_post-cat"/>
</dbReference>
<dbReference type="InterPro" id="IPR036230">
    <property type="entry name" value="LeuA_allosteric_dom_sf"/>
</dbReference>
<dbReference type="InterPro" id="IPR005671">
    <property type="entry name" value="LeuA_bact_synth"/>
</dbReference>
<dbReference type="InterPro" id="IPR000891">
    <property type="entry name" value="PYR_CT"/>
</dbReference>
<dbReference type="NCBIfam" id="TIGR00973">
    <property type="entry name" value="leuA_bact"/>
    <property type="match status" value="1"/>
</dbReference>
<dbReference type="NCBIfam" id="NF002084">
    <property type="entry name" value="PRK00915.1-1"/>
    <property type="match status" value="1"/>
</dbReference>
<dbReference type="NCBIfam" id="NF002086">
    <property type="entry name" value="PRK00915.1-3"/>
    <property type="match status" value="1"/>
</dbReference>
<dbReference type="PANTHER" id="PTHR10277:SF9">
    <property type="entry name" value="2-ISOPROPYLMALATE SYNTHASE 1, CHLOROPLASTIC-RELATED"/>
    <property type="match status" value="1"/>
</dbReference>
<dbReference type="PANTHER" id="PTHR10277">
    <property type="entry name" value="HOMOCITRATE SYNTHASE-RELATED"/>
    <property type="match status" value="1"/>
</dbReference>
<dbReference type="Pfam" id="PF22617">
    <property type="entry name" value="HCS_D2"/>
    <property type="match status" value="1"/>
</dbReference>
<dbReference type="Pfam" id="PF00682">
    <property type="entry name" value="HMGL-like"/>
    <property type="match status" value="1"/>
</dbReference>
<dbReference type="Pfam" id="PF08502">
    <property type="entry name" value="LeuA_dimer"/>
    <property type="match status" value="1"/>
</dbReference>
<dbReference type="SMART" id="SM00917">
    <property type="entry name" value="LeuA_dimer"/>
    <property type="match status" value="1"/>
</dbReference>
<dbReference type="SUPFAM" id="SSF110921">
    <property type="entry name" value="2-isopropylmalate synthase LeuA, allosteric (dimerisation) domain"/>
    <property type="match status" value="1"/>
</dbReference>
<dbReference type="SUPFAM" id="SSF51569">
    <property type="entry name" value="Aldolase"/>
    <property type="match status" value="1"/>
</dbReference>
<dbReference type="PROSITE" id="PS00815">
    <property type="entry name" value="AIPM_HOMOCIT_SYNTH_1"/>
    <property type="match status" value="1"/>
</dbReference>
<dbReference type="PROSITE" id="PS00816">
    <property type="entry name" value="AIPM_HOMOCIT_SYNTH_2"/>
    <property type="match status" value="1"/>
</dbReference>
<dbReference type="PROSITE" id="PS50991">
    <property type="entry name" value="PYR_CT"/>
    <property type="match status" value="1"/>
</dbReference>
<accession>Q8FL75</accession>
<comment type="function">
    <text evidence="2">Catalyzes the condensation of the acetyl group of acetyl-CoA with 3-methyl-2-oxobutanoate (2-ketoisovalerate) to form 3-carboxy-3-hydroxy-4-methylpentanoate (2-isopropylmalate).</text>
</comment>
<comment type="catalytic activity">
    <reaction evidence="2">
        <text>3-methyl-2-oxobutanoate + acetyl-CoA + H2O = (2S)-2-isopropylmalate + CoA + H(+)</text>
        <dbReference type="Rhea" id="RHEA:21524"/>
        <dbReference type="ChEBI" id="CHEBI:1178"/>
        <dbReference type="ChEBI" id="CHEBI:11851"/>
        <dbReference type="ChEBI" id="CHEBI:15377"/>
        <dbReference type="ChEBI" id="CHEBI:15378"/>
        <dbReference type="ChEBI" id="CHEBI:57287"/>
        <dbReference type="ChEBI" id="CHEBI:57288"/>
        <dbReference type="EC" id="2.3.3.13"/>
    </reaction>
</comment>
<comment type="cofactor">
    <cofactor evidence="2">
        <name>Mn(2+)</name>
        <dbReference type="ChEBI" id="CHEBI:29035"/>
    </cofactor>
</comment>
<comment type="pathway">
    <text evidence="2">Amino-acid biosynthesis; L-leucine biosynthesis; L-leucine from 3-methyl-2-oxobutanoate: step 1/4.</text>
</comment>
<comment type="subunit">
    <text evidence="2">Homodimer.</text>
</comment>
<comment type="subcellular location">
    <subcellularLocation>
        <location evidence="2">Cytoplasm</location>
    </subcellularLocation>
</comment>
<comment type="similarity">
    <text evidence="2">Belongs to the alpha-IPM synthase/homocitrate synthase family. LeuA type 1 subfamily.</text>
</comment>
<comment type="sequence caution" evidence="3">
    <conflict type="erroneous initiation">
        <sequence resource="EMBL-CDS" id="AAN78587"/>
    </conflict>
    <text>Extended N-terminus.</text>
</comment>
<feature type="initiator methionine" description="Removed" evidence="1">
    <location>
        <position position="1"/>
    </location>
</feature>
<feature type="chain" id="PRO_0000140352" description="2-isopropylmalate synthase">
    <location>
        <begin position="2"/>
        <end position="523"/>
    </location>
</feature>
<feature type="domain" description="Pyruvate carboxyltransferase" evidence="2">
    <location>
        <begin position="5"/>
        <end position="267"/>
    </location>
</feature>
<feature type="region of interest" description="Regulatory domain" evidence="2">
    <location>
        <begin position="392"/>
        <end position="523"/>
    </location>
</feature>
<feature type="binding site" evidence="2">
    <location>
        <position position="14"/>
    </location>
    <ligand>
        <name>Mn(2+)</name>
        <dbReference type="ChEBI" id="CHEBI:29035"/>
    </ligand>
</feature>
<feature type="binding site" evidence="2">
    <location>
        <position position="202"/>
    </location>
    <ligand>
        <name>Mn(2+)</name>
        <dbReference type="ChEBI" id="CHEBI:29035"/>
    </ligand>
</feature>
<feature type="binding site" evidence="2">
    <location>
        <position position="204"/>
    </location>
    <ligand>
        <name>Mn(2+)</name>
        <dbReference type="ChEBI" id="CHEBI:29035"/>
    </ligand>
</feature>
<feature type="binding site" evidence="2">
    <location>
        <position position="238"/>
    </location>
    <ligand>
        <name>Mn(2+)</name>
        <dbReference type="ChEBI" id="CHEBI:29035"/>
    </ligand>
</feature>
<keyword id="KW-0028">Amino-acid biosynthesis</keyword>
<keyword id="KW-0100">Branched-chain amino acid biosynthesis</keyword>
<keyword id="KW-0963">Cytoplasm</keyword>
<keyword id="KW-0432">Leucine biosynthesis</keyword>
<keyword id="KW-0464">Manganese</keyword>
<keyword id="KW-0479">Metal-binding</keyword>
<keyword id="KW-1185">Reference proteome</keyword>
<keyword id="KW-0808">Transferase</keyword>
<evidence type="ECO:0000250" key="1"/>
<evidence type="ECO:0000255" key="2">
    <source>
        <dbReference type="HAMAP-Rule" id="MF_01025"/>
    </source>
</evidence>
<evidence type="ECO:0000305" key="3"/>
<proteinExistence type="inferred from homology"/>
<name>LEU1_ECOL6</name>
<gene>
    <name evidence="2" type="primary">leuA</name>
    <name type="ordered locus">c0091</name>
</gene>